<proteinExistence type="inferred from homology"/>
<name>PETN_PORPU</name>
<keyword id="KW-0150">Chloroplast</keyword>
<keyword id="KW-0249">Electron transport</keyword>
<keyword id="KW-0472">Membrane</keyword>
<keyword id="KW-0602">Photosynthesis</keyword>
<keyword id="KW-0934">Plastid</keyword>
<keyword id="KW-0793">Thylakoid</keyword>
<keyword id="KW-0812">Transmembrane</keyword>
<keyword id="KW-1133">Transmembrane helix</keyword>
<keyword id="KW-0813">Transport</keyword>
<comment type="function">
    <text evidence="1">Component of the cytochrome b6-f complex, which mediates electron transfer between photosystem II (PSII) and photosystem I (PSI), cyclic electron flow around PSI, and state transitions.</text>
</comment>
<comment type="subunit">
    <text evidence="1">The 4 large subunits of the cytochrome b6-f complex are cytochrome b6, subunit IV (17 kDa polypeptide, PetD), cytochrome f and the Rieske protein, while the 4 small subunits are PetG, PetL, PetM and PetN. The complex functions as a dimer (By similarity).</text>
</comment>
<comment type="subcellular location">
    <subcellularLocation>
        <location evidence="1">Plastid</location>
        <location evidence="1">Chloroplast thylakoid membrane</location>
        <topology evidence="1">Single-pass membrane protein</topology>
    </subcellularLocation>
</comment>
<comment type="similarity">
    <text evidence="3">Belongs to the PetN family.</text>
</comment>
<protein>
    <recommendedName>
        <fullName>Cytochrome b6-f complex subunit 8</fullName>
    </recommendedName>
    <alternativeName>
        <fullName>Cytochrome b6-f complex subunit PetN</fullName>
    </alternativeName>
    <alternativeName>
        <fullName>Cytochrome b6-f complex subunit VIII</fullName>
    </alternativeName>
</protein>
<sequence>MDILSLGWAALMAMFTFSIAMVVWGRNGF</sequence>
<evidence type="ECO:0000250" key="1"/>
<evidence type="ECO:0000255" key="2"/>
<evidence type="ECO:0000305" key="3"/>
<accession>P51276</accession>
<organism>
    <name type="scientific">Porphyra purpurea</name>
    <name type="common">Red seaweed</name>
    <name type="synonym">Ulva purpurea</name>
    <dbReference type="NCBI Taxonomy" id="2787"/>
    <lineage>
        <taxon>Eukaryota</taxon>
        <taxon>Rhodophyta</taxon>
        <taxon>Bangiophyceae</taxon>
        <taxon>Bangiales</taxon>
        <taxon>Bangiaceae</taxon>
        <taxon>Porphyra</taxon>
    </lineage>
</organism>
<gene>
    <name type="primary">petN</name>
    <name type="synonym">ycf6</name>
</gene>
<reference key="1">
    <citation type="journal article" date="1995" name="Plant Mol. Biol. Rep.">
        <title>Complete nucleotide sequence of the Porphyra purpurea chloroplast genome.</title>
        <authorList>
            <person name="Reith M.E."/>
            <person name="Munholland J."/>
        </authorList>
    </citation>
    <scope>NUCLEOTIDE SEQUENCE [LARGE SCALE GENOMIC DNA]</scope>
    <source>
        <strain>Avonport</strain>
    </source>
</reference>
<feature type="chain" id="PRO_0000217126" description="Cytochrome b6-f complex subunit 8">
    <location>
        <begin position="1"/>
        <end position="29"/>
    </location>
</feature>
<feature type="transmembrane region" description="Helical" evidence="2">
    <location>
        <begin position="3"/>
        <end position="23"/>
    </location>
</feature>
<dbReference type="EMBL" id="U38804">
    <property type="protein sequence ID" value="AAC08162.1"/>
    <property type="molecule type" value="Genomic_DNA"/>
</dbReference>
<dbReference type="PIR" id="S73197">
    <property type="entry name" value="S73197"/>
</dbReference>
<dbReference type="RefSeq" id="NP_053886.1">
    <property type="nucleotide sequence ID" value="NC_000925.1"/>
</dbReference>
<dbReference type="SMR" id="P51276"/>
<dbReference type="GeneID" id="809906"/>
<dbReference type="GO" id="GO:0009535">
    <property type="term" value="C:chloroplast thylakoid membrane"/>
    <property type="evidence" value="ECO:0007669"/>
    <property type="project" value="UniProtKB-SubCell"/>
</dbReference>
<dbReference type="GO" id="GO:0009512">
    <property type="term" value="C:cytochrome b6f complex"/>
    <property type="evidence" value="ECO:0007669"/>
    <property type="project" value="InterPro"/>
</dbReference>
<dbReference type="GO" id="GO:0045158">
    <property type="term" value="F:electron transporter, transferring electrons within cytochrome b6/f complex of photosystem II activity"/>
    <property type="evidence" value="ECO:0007669"/>
    <property type="project" value="InterPro"/>
</dbReference>
<dbReference type="GO" id="GO:0017004">
    <property type="term" value="P:cytochrome complex assembly"/>
    <property type="evidence" value="ECO:0007669"/>
    <property type="project" value="UniProtKB-UniRule"/>
</dbReference>
<dbReference type="GO" id="GO:0015979">
    <property type="term" value="P:photosynthesis"/>
    <property type="evidence" value="ECO:0007669"/>
    <property type="project" value="UniProtKB-KW"/>
</dbReference>
<dbReference type="HAMAP" id="MF_00395">
    <property type="entry name" value="Cytb6_f_PetN"/>
    <property type="match status" value="1"/>
</dbReference>
<dbReference type="InterPro" id="IPR036143">
    <property type="entry name" value="Cytochr_b6-f_cplx_su8_sf"/>
</dbReference>
<dbReference type="InterPro" id="IPR005497">
    <property type="entry name" value="Cytochrome_b6-f_cplx_su8"/>
</dbReference>
<dbReference type="NCBIfam" id="NF011331">
    <property type="entry name" value="PRK14747.1"/>
    <property type="match status" value="1"/>
</dbReference>
<dbReference type="Pfam" id="PF03742">
    <property type="entry name" value="PetN"/>
    <property type="match status" value="1"/>
</dbReference>
<dbReference type="SUPFAM" id="SSF103451">
    <property type="entry name" value="PetN subunit of the cytochrome b6f complex"/>
    <property type="match status" value="1"/>
</dbReference>
<geneLocation type="chloroplast"/>